<organism>
    <name type="scientific">Caenorhabditis elegans</name>
    <dbReference type="NCBI Taxonomy" id="6239"/>
    <lineage>
        <taxon>Eukaryota</taxon>
        <taxon>Metazoa</taxon>
        <taxon>Ecdysozoa</taxon>
        <taxon>Nematoda</taxon>
        <taxon>Chromadorea</taxon>
        <taxon>Rhabditida</taxon>
        <taxon>Rhabditina</taxon>
        <taxon>Rhabditomorpha</taxon>
        <taxon>Rhabditoidea</taxon>
        <taxon>Rhabditidae</taxon>
        <taxon>Peloderinae</taxon>
        <taxon>Caenorhabditis</taxon>
    </lineage>
</organism>
<sequence length="229" mass="25441">MTEVYDLEITTNATDFPMEKKYPAGMSLNDLKKKLELVVGTTVDSMRIQLFDGDDQLKGELTDGAKSLKDLGVRDGYRIHAVDVTGGNEDFKDESMVEKYEMSDDTYGKRTDSVRAWKKKMQEEQGSAAPMENESDKLNEEAAKNIMVGNRCEVTVGAQMARRGEVAYVGATKFKEGVWVGVKYDEPVGKNDGSVAGVRYFDCDPKYGGFVRPVDVKVGDFPELSIDEI</sequence>
<dbReference type="EMBL" id="Z77663">
    <property type="protein sequence ID" value="CAB01212.1"/>
    <property type="molecule type" value="Genomic_DNA"/>
</dbReference>
<dbReference type="PIR" id="T22581">
    <property type="entry name" value="T22581"/>
</dbReference>
<dbReference type="RefSeq" id="NP_506367.1">
    <property type="nucleotide sequence ID" value="NM_073966.4"/>
</dbReference>
<dbReference type="PDB" id="1LPL">
    <property type="method" value="X-ray"/>
    <property type="resolution" value="1.77 A"/>
    <property type="chains" value="A=135-229"/>
</dbReference>
<dbReference type="PDB" id="1T0Y">
    <property type="method" value="NMR"/>
    <property type="chains" value="A=1-120"/>
</dbReference>
<dbReference type="PDB" id="1TOV">
    <property type="method" value="X-ray"/>
    <property type="resolution" value="1.77 A"/>
    <property type="chains" value="A=132-229"/>
</dbReference>
<dbReference type="PDBsum" id="1LPL"/>
<dbReference type="PDBsum" id="1T0Y"/>
<dbReference type="PDBsum" id="1TOV"/>
<dbReference type="BMRB" id="Q20728"/>
<dbReference type="SMR" id="Q20728"/>
<dbReference type="BioGRID" id="50924">
    <property type="interactions" value="4"/>
</dbReference>
<dbReference type="FunCoup" id="Q20728">
    <property type="interactions" value="2513"/>
</dbReference>
<dbReference type="STRING" id="6239.F53F4.3.1"/>
<dbReference type="PaxDb" id="6239-F53F4.3"/>
<dbReference type="PeptideAtlas" id="Q20728"/>
<dbReference type="EnsemblMetazoa" id="F53F4.3.1">
    <property type="protein sequence ID" value="F53F4.3.1"/>
    <property type="gene ID" value="WBGene00009987"/>
</dbReference>
<dbReference type="GeneID" id="186176"/>
<dbReference type="KEGG" id="cel:CELE_F53F4.3"/>
<dbReference type="UCSC" id="F53F4.3">
    <property type="organism name" value="c. elegans"/>
</dbReference>
<dbReference type="AGR" id="WB:WBGene00009987"/>
<dbReference type="CTD" id="186176"/>
<dbReference type="WormBase" id="F53F4.3">
    <property type="protein sequence ID" value="CE10958"/>
    <property type="gene ID" value="WBGene00009987"/>
    <property type="gene designation" value="tbcb-1"/>
</dbReference>
<dbReference type="eggNOG" id="KOG3206">
    <property type="taxonomic scope" value="Eukaryota"/>
</dbReference>
<dbReference type="HOGENOM" id="CLU_067577_1_0_1"/>
<dbReference type="InParanoid" id="Q20728"/>
<dbReference type="OMA" id="AWKKKMQ"/>
<dbReference type="OrthoDB" id="5295208at2759"/>
<dbReference type="PhylomeDB" id="Q20728"/>
<dbReference type="EvolutionaryTrace" id="Q20728"/>
<dbReference type="PRO" id="PR:Q20728"/>
<dbReference type="Proteomes" id="UP000001940">
    <property type="component" value="Chromosome V"/>
</dbReference>
<dbReference type="Bgee" id="WBGene00009987">
    <property type="expression patterns" value="Expressed in germ line (C elegans) and 4 other cell types or tissues"/>
</dbReference>
<dbReference type="GO" id="GO:0005737">
    <property type="term" value="C:cytoplasm"/>
    <property type="evidence" value="ECO:0007669"/>
    <property type="project" value="UniProtKB-SubCell"/>
</dbReference>
<dbReference type="GO" id="GO:0005874">
    <property type="term" value="C:microtubule"/>
    <property type="evidence" value="ECO:0007669"/>
    <property type="project" value="UniProtKB-KW"/>
</dbReference>
<dbReference type="GO" id="GO:0043014">
    <property type="term" value="F:alpha-tubulin binding"/>
    <property type="evidence" value="ECO:0007669"/>
    <property type="project" value="InterPro"/>
</dbReference>
<dbReference type="GO" id="GO:0007023">
    <property type="term" value="P:post-chaperonin tubulin folding pathway"/>
    <property type="evidence" value="ECO:0007669"/>
    <property type="project" value="InterPro"/>
</dbReference>
<dbReference type="GO" id="GO:0007021">
    <property type="term" value="P:tubulin complex assembly"/>
    <property type="evidence" value="ECO:0007669"/>
    <property type="project" value="InterPro"/>
</dbReference>
<dbReference type="CDD" id="cd01789">
    <property type="entry name" value="Ubl_TBCB"/>
    <property type="match status" value="1"/>
</dbReference>
<dbReference type="DisProt" id="DP03057"/>
<dbReference type="FunFam" id="2.30.30.190:FF:000013">
    <property type="entry name" value="Tubulin-folding cofactor B"/>
    <property type="match status" value="1"/>
</dbReference>
<dbReference type="Gene3D" id="2.30.30.190">
    <property type="entry name" value="CAP Gly-rich-like domain"/>
    <property type="match status" value="1"/>
</dbReference>
<dbReference type="Gene3D" id="3.10.20.90">
    <property type="entry name" value="Phosphatidylinositol 3-kinase Catalytic Subunit, Chain A, domain 1"/>
    <property type="match status" value="1"/>
</dbReference>
<dbReference type="InterPro" id="IPR036859">
    <property type="entry name" value="CAP-Gly_dom_sf"/>
</dbReference>
<dbReference type="InterPro" id="IPR000938">
    <property type="entry name" value="CAP-Gly_domain"/>
</dbReference>
<dbReference type="InterPro" id="IPR045172">
    <property type="entry name" value="TBCB_Ubl"/>
</dbReference>
<dbReference type="InterPro" id="IPR000626">
    <property type="entry name" value="Ubiquitin-like_dom"/>
</dbReference>
<dbReference type="InterPro" id="IPR029071">
    <property type="entry name" value="Ubiquitin-like_domsf"/>
</dbReference>
<dbReference type="PANTHER" id="PTHR18916">
    <property type="entry name" value="DYNACTIN 1-RELATED MICROTUBULE-BINDING"/>
    <property type="match status" value="1"/>
</dbReference>
<dbReference type="PANTHER" id="PTHR18916:SF85">
    <property type="entry name" value="TUBULIN-FOLDING COFACTOR B"/>
    <property type="match status" value="1"/>
</dbReference>
<dbReference type="Pfam" id="PF01302">
    <property type="entry name" value="CAP_GLY"/>
    <property type="match status" value="1"/>
</dbReference>
<dbReference type="Pfam" id="PF14560">
    <property type="entry name" value="Ubiquitin_2"/>
    <property type="match status" value="1"/>
</dbReference>
<dbReference type="SMART" id="SM01052">
    <property type="entry name" value="CAP_GLY"/>
    <property type="match status" value="1"/>
</dbReference>
<dbReference type="SUPFAM" id="SSF74924">
    <property type="entry name" value="Cap-Gly domain"/>
    <property type="match status" value="1"/>
</dbReference>
<dbReference type="SUPFAM" id="SSF54236">
    <property type="entry name" value="Ubiquitin-like"/>
    <property type="match status" value="1"/>
</dbReference>
<dbReference type="PROSITE" id="PS00845">
    <property type="entry name" value="CAP_GLY_1"/>
    <property type="match status" value="1"/>
</dbReference>
<dbReference type="PROSITE" id="PS50245">
    <property type="entry name" value="CAP_GLY_2"/>
    <property type="match status" value="1"/>
</dbReference>
<keyword id="KW-0002">3D-structure</keyword>
<keyword id="KW-0143">Chaperone</keyword>
<keyword id="KW-0963">Cytoplasm</keyword>
<keyword id="KW-0206">Cytoskeleton</keyword>
<keyword id="KW-0493">Microtubule</keyword>
<keyword id="KW-1185">Reference proteome</keyword>
<proteinExistence type="evidence at protein level"/>
<evidence type="ECO:0000250" key="1"/>
<evidence type="ECO:0000255" key="2">
    <source>
        <dbReference type="PROSITE-ProRule" id="PRU00045"/>
    </source>
</evidence>
<evidence type="ECO:0000305" key="3"/>
<evidence type="ECO:0000312" key="4">
    <source>
        <dbReference type="WormBase" id="F53F4.3"/>
    </source>
</evidence>
<evidence type="ECO:0007829" key="5">
    <source>
        <dbReference type="PDB" id="1LPL"/>
    </source>
</evidence>
<evidence type="ECO:0007829" key="6">
    <source>
        <dbReference type="PDB" id="1T0Y"/>
    </source>
</evidence>
<protein>
    <recommendedName>
        <fullName>Tubulin-specific chaperone B</fullName>
    </recommendedName>
    <alternativeName>
        <fullName>Tubulin-folding cofactor B</fullName>
        <shortName>CoB</shortName>
    </alternativeName>
</protein>
<name>TBCB_CAEEL</name>
<gene>
    <name evidence="4" type="primary">tbcb-1</name>
    <name evidence="4" type="ORF">F53F4.3</name>
</gene>
<feature type="chain" id="PRO_0000083546" description="Tubulin-specific chaperone B">
    <location>
        <begin position="1"/>
        <end position="229"/>
    </location>
</feature>
<feature type="domain" description="CAP-Gly" evidence="2">
    <location>
        <begin position="170"/>
        <end position="212"/>
    </location>
</feature>
<feature type="strand" evidence="6">
    <location>
        <begin position="4"/>
        <end position="13"/>
    </location>
</feature>
<feature type="strand" evidence="6">
    <location>
        <begin position="18"/>
        <end position="23"/>
    </location>
</feature>
<feature type="helix" evidence="6">
    <location>
        <begin position="28"/>
        <end position="39"/>
    </location>
</feature>
<feature type="turn" evidence="6">
    <location>
        <begin position="43"/>
        <end position="45"/>
    </location>
</feature>
<feature type="strand" evidence="6">
    <location>
        <begin position="46"/>
        <end position="51"/>
    </location>
</feature>
<feature type="strand" evidence="6">
    <location>
        <begin position="53"/>
        <end position="60"/>
    </location>
</feature>
<feature type="strand" evidence="6">
    <location>
        <begin position="65"/>
        <end position="67"/>
    </location>
</feature>
<feature type="turn" evidence="6">
    <location>
        <begin position="68"/>
        <end position="72"/>
    </location>
</feature>
<feature type="strand" evidence="6">
    <location>
        <begin position="77"/>
        <end position="83"/>
    </location>
</feature>
<feature type="helix" evidence="5">
    <location>
        <begin position="137"/>
        <end position="143"/>
    </location>
</feature>
<feature type="strand" evidence="5">
    <location>
        <begin position="151"/>
        <end position="154"/>
    </location>
</feature>
<feature type="strand" evidence="5">
    <location>
        <begin position="162"/>
        <end position="170"/>
    </location>
</feature>
<feature type="strand" evidence="5">
    <location>
        <begin position="173"/>
        <end position="177"/>
    </location>
</feature>
<feature type="strand" evidence="5">
    <location>
        <begin position="179"/>
        <end position="187"/>
    </location>
</feature>
<feature type="strand" evidence="5">
    <location>
        <begin position="189"/>
        <end position="195"/>
    </location>
</feature>
<feature type="strand" evidence="5">
    <location>
        <begin position="207"/>
        <end position="211"/>
    </location>
</feature>
<feature type="helix" evidence="5">
    <location>
        <begin position="213"/>
        <end position="215"/>
    </location>
</feature>
<feature type="strand" evidence="5">
    <location>
        <begin position="216"/>
        <end position="219"/>
    </location>
</feature>
<comment type="function">
    <text evidence="1">Binds to alpha-tubulin folding intermediates after their interaction with cytosolic chaperonin in the pathway leading from newly synthesized tubulin to properly folded heterodimer.</text>
</comment>
<comment type="subunit">
    <text evidence="1">Supercomplex made of cofactors A to E. Cofactors A and D function by capturing and stabilizing tubulin in a quasi-native conformation. Cofactor E binds to the cofactor D-tubulin complex; interaction with cofactor C then causes the release of tubulin polypeptides that are committed to the native state (By similarity).</text>
</comment>
<comment type="subcellular location">
    <subcellularLocation>
        <location evidence="1">Cytoplasm</location>
    </subcellularLocation>
    <subcellularLocation>
        <location evidence="1">Cytoplasm</location>
        <location evidence="1">Cytoskeleton</location>
    </subcellularLocation>
</comment>
<comment type="similarity">
    <text evidence="3">Belongs to the TBCB family.</text>
</comment>
<accession>Q20728</accession>
<reference key="1">
    <citation type="journal article" date="1998" name="Science">
        <title>Genome sequence of the nematode C. elegans: a platform for investigating biology.</title>
        <authorList>
            <consortium name="The C. elegans sequencing consortium"/>
        </authorList>
    </citation>
    <scope>NUCLEOTIDE SEQUENCE [LARGE SCALE GENOMIC DNA]</scope>
    <source>
        <strain>Bristol N2</strain>
    </source>
</reference>
<reference key="2">
    <citation type="journal article" date="2002" name="J. Biol. Chem.">
        <title>Crystal structure of the cytoskeleton-associated protein glycine-rich (CAP-Gly) domain.</title>
        <authorList>
            <person name="Li S."/>
            <person name="Finley J."/>
            <person name="Liu Z.J."/>
            <person name="Qiu S.H."/>
            <person name="Chen H."/>
            <person name="Luan C.H."/>
            <person name="Carson M."/>
            <person name="Tsao J."/>
            <person name="Johnson D."/>
            <person name="Lin G."/>
            <person name="Zhao J."/>
            <person name="Thomas W."/>
            <person name="Nagy L.A."/>
            <person name="Sha B."/>
            <person name="DeLucas L.J."/>
            <person name="Wang B.C."/>
            <person name="Luo M."/>
        </authorList>
    </citation>
    <scope>X-RAY CRYSTALLOGRAPHY (1.77 ANGSTROMS) OF 135-229</scope>
</reference>
<reference key="3">
    <citation type="journal article" date="2004" name="J. Biol. Chem.">
        <title>Solution structure of a ubiquitin-like domain from tubulin-binding cofactor B.</title>
        <authorList>
            <person name="Lytle B.L."/>
            <person name="Peterson F.C."/>
            <person name="Qiu S.H."/>
            <person name="Luo M."/>
            <person name="Zhao Q."/>
            <person name="Markley J.L."/>
            <person name="Volkman B.F."/>
        </authorList>
    </citation>
    <scope>STRUCTURE BY NMR OF 1-120</scope>
</reference>